<dbReference type="EC" id="2.1.1.228" evidence="1"/>
<dbReference type="EMBL" id="FM200053">
    <property type="protein sequence ID" value="CAR60589.1"/>
    <property type="molecule type" value="Genomic_DNA"/>
</dbReference>
<dbReference type="RefSeq" id="WP_000469802.1">
    <property type="nucleotide sequence ID" value="NC_011147.1"/>
</dbReference>
<dbReference type="SMR" id="B5BE92"/>
<dbReference type="KEGG" id="sek:SSPA2358"/>
<dbReference type="HOGENOM" id="CLU_047363_0_1_6"/>
<dbReference type="Proteomes" id="UP000001869">
    <property type="component" value="Chromosome"/>
</dbReference>
<dbReference type="GO" id="GO:0005829">
    <property type="term" value="C:cytosol"/>
    <property type="evidence" value="ECO:0007669"/>
    <property type="project" value="TreeGrafter"/>
</dbReference>
<dbReference type="GO" id="GO:0052906">
    <property type="term" value="F:tRNA (guanine(37)-N1)-methyltransferase activity"/>
    <property type="evidence" value="ECO:0007669"/>
    <property type="project" value="UniProtKB-UniRule"/>
</dbReference>
<dbReference type="GO" id="GO:0002939">
    <property type="term" value="P:tRNA N1-guanine methylation"/>
    <property type="evidence" value="ECO:0007669"/>
    <property type="project" value="TreeGrafter"/>
</dbReference>
<dbReference type="CDD" id="cd18080">
    <property type="entry name" value="TrmD-like"/>
    <property type="match status" value="1"/>
</dbReference>
<dbReference type="FunFam" id="1.10.1270.20:FF:000001">
    <property type="entry name" value="tRNA (guanine-N(1)-)-methyltransferase"/>
    <property type="match status" value="1"/>
</dbReference>
<dbReference type="FunFam" id="3.40.1280.10:FF:000001">
    <property type="entry name" value="tRNA (guanine-N(1)-)-methyltransferase"/>
    <property type="match status" value="1"/>
</dbReference>
<dbReference type="Gene3D" id="3.40.1280.10">
    <property type="match status" value="1"/>
</dbReference>
<dbReference type="Gene3D" id="1.10.1270.20">
    <property type="entry name" value="tRNA(m1g37)methyltransferase, domain 2"/>
    <property type="match status" value="1"/>
</dbReference>
<dbReference type="HAMAP" id="MF_00605">
    <property type="entry name" value="TrmD"/>
    <property type="match status" value="1"/>
</dbReference>
<dbReference type="InterPro" id="IPR029028">
    <property type="entry name" value="Alpha/beta_knot_MTases"/>
</dbReference>
<dbReference type="InterPro" id="IPR023148">
    <property type="entry name" value="tRNA_m1G_MeTrfase_C_sf"/>
</dbReference>
<dbReference type="InterPro" id="IPR002649">
    <property type="entry name" value="tRNA_m1G_MeTrfase_TrmD"/>
</dbReference>
<dbReference type="InterPro" id="IPR029026">
    <property type="entry name" value="tRNA_m1G_MTases_N"/>
</dbReference>
<dbReference type="InterPro" id="IPR016009">
    <property type="entry name" value="tRNA_MeTrfase_TRMD/TRM10"/>
</dbReference>
<dbReference type="NCBIfam" id="NF000648">
    <property type="entry name" value="PRK00026.1"/>
    <property type="match status" value="1"/>
</dbReference>
<dbReference type="NCBIfam" id="TIGR00088">
    <property type="entry name" value="trmD"/>
    <property type="match status" value="1"/>
</dbReference>
<dbReference type="PANTHER" id="PTHR46417">
    <property type="entry name" value="TRNA (GUANINE-N(1)-)-METHYLTRANSFERASE"/>
    <property type="match status" value="1"/>
</dbReference>
<dbReference type="PANTHER" id="PTHR46417:SF1">
    <property type="entry name" value="TRNA (GUANINE-N(1)-)-METHYLTRANSFERASE"/>
    <property type="match status" value="1"/>
</dbReference>
<dbReference type="Pfam" id="PF01746">
    <property type="entry name" value="tRNA_m1G_MT"/>
    <property type="match status" value="1"/>
</dbReference>
<dbReference type="PIRSF" id="PIRSF000386">
    <property type="entry name" value="tRNA_mtase"/>
    <property type="match status" value="1"/>
</dbReference>
<dbReference type="SUPFAM" id="SSF75217">
    <property type="entry name" value="alpha/beta knot"/>
    <property type="match status" value="1"/>
</dbReference>
<feature type="chain" id="PRO_1000130206" description="tRNA (guanine-N(1)-)-methyltransferase">
    <location>
        <begin position="1"/>
        <end position="255"/>
    </location>
</feature>
<feature type="binding site" evidence="1">
    <location>
        <position position="113"/>
    </location>
    <ligand>
        <name>S-adenosyl-L-methionine</name>
        <dbReference type="ChEBI" id="CHEBI:59789"/>
    </ligand>
</feature>
<feature type="binding site" evidence="1">
    <location>
        <begin position="133"/>
        <end position="138"/>
    </location>
    <ligand>
        <name>S-adenosyl-L-methionine</name>
        <dbReference type="ChEBI" id="CHEBI:59789"/>
    </ligand>
</feature>
<keyword id="KW-0963">Cytoplasm</keyword>
<keyword id="KW-0489">Methyltransferase</keyword>
<keyword id="KW-0949">S-adenosyl-L-methionine</keyword>
<keyword id="KW-0808">Transferase</keyword>
<keyword id="KW-0819">tRNA processing</keyword>
<comment type="function">
    <text evidence="1">Specifically methylates guanosine-37 in various tRNAs.</text>
</comment>
<comment type="catalytic activity">
    <reaction evidence="1">
        <text>guanosine(37) in tRNA + S-adenosyl-L-methionine = N(1)-methylguanosine(37) in tRNA + S-adenosyl-L-homocysteine + H(+)</text>
        <dbReference type="Rhea" id="RHEA:36899"/>
        <dbReference type="Rhea" id="RHEA-COMP:10145"/>
        <dbReference type="Rhea" id="RHEA-COMP:10147"/>
        <dbReference type="ChEBI" id="CHEBI:15378"/>
        <dbReference type="ChEBI" id="CHEBI:57856"/>
        <dbReference type="ChEBI" id="CHEBI:59789"/>
        <dbReference type="ChEBI" id="CHEBI:73542"/>
        <dbReference type="ChEBI" id="CHEBI:74269"/>
        <dbReference type="EC" id="2.1.1.228"/>
    </reaction>
</comment>
<comment type="subunit">
    <text evidence="1">Homodimer.</text>
</comment>
<comment type="subcellular location">
    <subcellularLocation>
        <location evidence="1">Cytoplasm</location>
    </subcellularLocation>
</comment>
<comment type="similarity">
    <text evidence="1">Belongs to the RNA methyltransferase TrmD family.</text>
</comment>
<protein>
    <recommendedName>
        <fullName evidence="1">tRNA (guanine-N(1)-)-methyltransferase</fullName>
        <ecNumber evidence="1">2.1.1.228</ecNumber>
    </recommendedName>
    <alternativeName>
        <fullName evidence="1">M1G-methyltransferase</fullName>
    </alternativeName>
    <alternativeName>
        <fullName evidence="1">tRNA [GM37] methyltransferase</fullName>
    </alternativeName>
</protein>
<accession>B5BE92</accession>
<sequence length="255" mass="28318">MFIGIVSLFPEMFRAITDYGVTGRAVKKGLLNIQSWSPRDFAHDRHRTVDDRPYGGGPGMLMMVQPLRDAIHAAKAAAGEGAKVIYLSPQGRKLDQAGVSELATNQKLILVCGRYEGVDERVIQAEIDEEWSIGDYVLSGGELPAMTLIDSVARFIPGVLGHEASAIEDSFADGLLDCPHYTRPEVLEGMEVPPVLLSGNHAEIRRWRLKQSLGRTWLRRPELLENLALTEEQARLLAEFKTEHAQQQHKHDGMA</sequence>
<name>TRMD_SALPK</name>
<organism>
    <name type="scientific">Salmonella paratyphi A (strain AKU_12601)</name>
    <dbReference type="NCBI Taxonomy" id="554290"/>
    <lineage>
        <taxon>Bacteria</taxon>
        <taxon>Pseudomonadati</taxon>
        <taxon>Pseudomonadota</taxon>
        <taxon>Gammaproteobacteria</taxon>
        <taxon>Enterobacterales</taxon>
        <taxon>Enterobacteriaceae</taxon>
        <taxon>Salmonella</taxon>
    </lineage>
</organism>
<proteinExistence type="inferred from homology"/>
<reference key="1">
    <citation type="journal article" date="2009" name="BMC Genomics">
        <title>Pseudogene accumulation in the evolutionary histories of Salmonella enterica serovars Paratyphi A and Typhi.</title>
        <authorList>
            <person name="Holt K.E."/>
            <person name="Thomson N.R."/>
            <person name="Wain J."/>
            <person name="Langridge G.C."/>
            <person name="Hasan R."/>
            <person name="Bhutta Z.A."/>
            <person name="Quail M.A."/>
            <person name="Norbertczak H."/>
            <person name="Walker D."/>
            <person name="Simmonds M."/>
            <person name="White B."/>
            <person name="Bason N."/>
            <person name="Mungall K."/>
            <person name="Dougan G."/>
            <person name="Parkhill J."/>
        </authorList>
    </citation>
    <scope>NUCLEOTIDE SEQUENCE [LARGE SCALE GENOMIC DNA]</scope>
    <source>
        <strain>AKU_12601</strain>
    </source>
</reference>
<evidence type="ECO:0000255" key="1">
    <source>
        <dbReference type="HAMAP-Rule" id="MF_00605"/>
    </source>
</evidence>
<gene>
    <name evidence="1" type="primary">trmD</name>
    <name type="ordered locus">SSPA2358</name>
</gene>